<gene>
    <name type="ORF">DDB_G0283913</name>
</gene>
<keyword id="KW-0175">Coiled coil</keyword>
<keyword id="KW-0472">Membrane</keyword>
<keyword id="KW-1185">Reference proteome</keyword>
<keyword id="KW-0346">Stress response</keyword>
<keyword id="KW-0812">Transmembrane</keyword>
<keyword id="KW-1133">Transmembrane helix</keyword>
<protein>
    <recommendedName>
        <fullName>Heat shock protein DDB_G0283913</fullName>
    </recommendedName>
</protein>
<accession>Q54QE8</accession>
<sequence>MFVGTLVIIICTTLIIIIKKILKRKKEKLNLKESKKKKQDNERKNFEGLLTKKRVEVGDLKKEIEKLNKDKIELAKKLNCYIGDSSIPANGIREYDIIIDIPSVDYLSQSRKSWIIYVSNQLKQKMGSSNYNKKRPLHSLLKEYKKFSTLACLGVLNKGKTFFINKYNGTYLPSGTQAQTIGLSLSISSLNETITIDTAGSNTALQVCEDKTEEHLARKESTEMFICDMSFSLASIIVYVLNELTWNDQRFILALQSKIQSLRSESNIIKKLLVVHNYPKVNSQEELLSEIKTYIESPFNGNFHHHHVDIKKIESKEEIVLFFVESVNKTHHFFLCNDNSEFGKRYNQLTIEKIRTYKNYNDNLDLDKVLLTSLQNNMIPYCKSPKKLKITEHEPTINQINNNNSSNNKSQLEERPIADSLFQTQSFLHPSIDDTIQDNDKSGSEVSTPTISSSSSSPLQPIIKDEKDDNIENKSDEANTSLKYKPLFTSFGTDEYSKHLKELCKLHQMVSPHRSSIKQIPAFTISPEIDCNRENDFKLIANRIEIIGLNMVFSSGFKPFHDIVKVNSDLRYIIEVPQLEMEDIEFETKHLGSQWYLNIKGIKKLRYDSNDQTTVYPSNLTSLCPSQNQRRDGLFEFSLPIPTEYLPIKPAVSLDKGVITFKFEKIG</sequence>
<name>Y3913_DICDI</name>
<comment type="subcellular location">
    <subcellularLocation>
        <location evidence="4">Membrane</location>
        <topology evidence="4">Multi-pass membrane protein</topology>
    </subcellularLocation>
</comment>
<comment type="similarity">
    <text evidence="2">Belongs to the small heat shock protein (HSP20) family.</text>
</comment>
<evidence type="ECO:0000255" key="1"/>
<evidence type="ECO:0000255" key="2">
    <source>
        <dbReference type="PROSITE-ProRule" id="PRU00285"/>
    </source>
</evidence>
<evidence type="ECO:0000256" key="3">
    <source>
        <dbReference type="SAM" id="MobiDB-lite"/>
    </source>
</evidence>
<evidence type="ECO:0000305" key="4"/>
<organism>
    <name type="scientific">Dictyostelium discoideum</name>
    <name type="common">Social amoeba</name>
    <dbReference type="NCBI Taxonomy" id="44689"/>
    <lineage>
        <taxon>Eukaryota</taxon>
        <taxon>Amoebozoa</taxon>
        <taxon>Evosea</taxon>
        <taxon>Eumycetozoa</taxon>
        <taxon>Dictyostelia</taxon>
        <taxon>Dictyosteliales</taxon>
        <taxon>Dictyosteliaceae</taxon>
        <taxon>Dictyostelium</taxon>
    </lineage>
</organism>
<feature type="chain" id="PRO_0000363911" description="Heat shock protein DDB_G0283913">
    <location>
        <begin position="1"/>
        <end position="667"/>
    </location>
</feature>
<feature type="transmembrane region" description="Helical" evidence="1">
    <location>
        <begin position="2"/>
        <end position="22"/>
    </location>
</feature>
<feature type="transmembrane region" description="Helical" evidence="1">
    <location>
        <begin position="224"/>
        <end position="244"/>
    </location>
</feature>
<feature type="domain" description="sHSP" evidence="2">
    <location>
        <begin position="551"/>
        <end position="667"/>
    </location>
</feature>
<feature type="region of interest" description="Disordered" evidence="3">
    <location>
        <begin position="432"/>
        <end position="478"/>
    </location>
</feature>
<feature type="coiled-coil region" evidence="1">
    <location>
        <begin position="18"/>
        <end position="82"/>
    </location>
</feature>
<feature type="compositionally biased region" description="Low complexity" evidence="3">
    <location>
        <begin position="444"/>
        <end position="457"/>
    </location>
</feature>
<feature type="compositionally biased region" description="Basic and acidic residues" evidence="3">
    <location>
        <begin position="463"/>
        <end position="477"/>
    </location>
</feature>
<proteinExistence type="inferred from homology"/>
<reference key="1">
    <citation type="journal article" date="2005" name="Nature">
        <title>The genome of the social amoeba Dictyostelium discoideum.</title>
        <authorList>
            <person name="Eichinger L."/>
            <person name="Pachebat J.A."/>
            <person name="Gloeckner G."/>
            <person name="Rajandream M.A."/>
            <person name="Sucgang R."/>
            <person name="Berriman M."/>
            <person name="Song J."/>
            <person name="Olsen R."/>
            <person name="Szafranski K."/>
            <person name="Xu Q."/>
            <person name="Tunggal B."/>
            <person name="Kummerfeld S."/>
            <person name="Madera M."/>
            <person name="Konfortov B.A."/>
            <person name="Rivero F."/>
            <person name="Bankier A.T."/>
            <person name="Lehmann R."/>
            <person name="Hamlin N."/>
            <person name="Davies R."/>
            <person name="Gaudet P."/>
            <person name="Fey P."/>
            <person name="Pilcher K."/>
            <person name="Chen G."/>
            <person name="Saunders D."/>
            <person name="Sodergren E.J."/>
            <person name="Davis P."/>
            <person name="Kerhornou A."/>
            <person name="Nie X."/>
            <person name="Hall N."/>
            <person name="Anjard C."/>
            <person name="Hemphill L."/>
            <person name="Bason N."/>
            <person name="Farbrother P."/>
            <person name="Desany B."/>
            <person name="Just E."/>
            <person name="Morio T."/>
            <person name="Rost R."/>
            <person name="Churcher C.M."/>
            <person name="Cooper J."/>
            <person name="Haydock S."/>
            <person name="van Driessche N."/>
            <person name="Cronin A."/>
            <person name="Goodhead I."/>
            <person name="Muzny D.M."/>
            <person name="Mourier T."/>
            <person name="Pain A."/>
            <person name="Lu M."/>
            <person name="Harper D."/>
            <person name="Lindsay R."/>
            <person name="Hauser H."/>
            <person name="James K.D."/>
            <person name="Quiles M."/>
            <person name="Madan Babu M."/>
            <person name="Saito T."/>
            <person name="Buchrieser C."/>
            <person name="Wardroper A."/>
            <person name="Felder M."/>
            <person name="Thangavelu M."/>
            <person name="Johnson D."/>
            <person name="Knights A."/>
            <person name="Loulseged H."/>
            <person name="Mungall K.L."/>
            <person name="Oliver K."/>
            <person name="Price C."/>
            <person name="Quail M.A."/>
            <person name="Urushihara H."/>
            <person name="Hernandez J."/>
            <person name="Rabbinowitsch E."/>
            <person name="Steffen D."/>
            <person name="Sanders M."/>
            <person name="Ma J."/>
            <person name="Kohara Y."/>
            <person name="Sharp S."/>
            <person name="Simmonds M.N."/>
            <person name="Spiegler S."/>
            <person name="Tivey A."/>
            <person name="Sugano S."/>
            <person name="White B."/>
            <person name="Walker D."/>
            <person name="Woodward J.R."/>
            <person name="Winckler T."/>
            <person name="Tanaka Y."/>
            <person name="Shaulsky G."/>
            <person name="Schleicher M."/>
            <person name="Weinstock G.M."/>
            <person name="Rosenthal A."/>
            <person name="Cox E.C."/>
            <person name="Chisholm R.L."/>
            <person name="Gibbs R.A."/>
            <person name="Loomis W.F."/>
            <person name="Platzer M."/>
            <person name="Kay R.R."/>
            <person name="Williams J.G."/>
            <person name="Dear P.H."/>
            <person name="Noegel A.A."/>
            <person name="Barrell B.G."/>
            <person name="Kuspa A."/>
        </authorList>
    </citation>
    <scope>NUCLEOTIDE SEQUENCE [LARGE SCALE GENOMIC DNA]</scope>
    <source>
        <strain>AX4</strain>
    </source>
</reference>
<dbReference type="EMBL" id="AAFI02000058">
    <property type="protein sequence ID" value="EAL65444.1"/>
    <property type="molecule type" value="Genomic_DNA"/>
</dbReference>
<dbReference type="RefSeq" id="XP_638796.1">
    <property type="nucleotide sequence ID" value="XM_633704.1"/>
</dbReference>
<dbReference type="STRING" id="44689.Q54QE8"/>
<dbReference type="PaxDb" id="44689-DDB0232159"/>
<dbReference type="EnsemblProtists" id="EAL65444">
    <property type="protein sequence ID" value="EAL65444"/>
    <property type="gene ID" value="DDB_G0283913"/>
</dbReference>
<dbReference type="GeneID" id="8624320"/>
<dbReference type="KEGG" id="ddi:DDB_G0283913"/>
<dbReference type="dictyBase" id="DDB_G0283913"/>
<dbReference type="VEuPathDB" id="AmoebaDB:DDB_G0283913"/>
<dbReference type="HOGENOM" id="CLU_421179_0_0_1"/>
<dbReference type="InParanoid" id="Q54QE8"/>
<dbReference type="PhylomeDB" id="Q54QE8"/>
<dbReference type="PRO" id="PR:Q54QE8"/>
<dbReference type="Proteomes" id="UP000002195">
    <property type="component" value="Chromosome 4"/>
</dbReference>
<dbReference type="GO" id="GO:0016020">
    <property type="term" value="C:membrane"/>
    <property type="evidence" value="ECO:0007669"/>
    <property type="project" value="UniProtKB-SubCell"/>
</dbReference>
<dbReference type="InterPro" id="IPR002068">
    <property type="entry name" value="A-crystallin/Hsp20_dom"/>
</dbReference>
<dbReference type="PANTHER" id="PTHR34726">
    <property type="entry name" value="GBP DOMAIN-CONTAINING PROTEIN"/>
    <property type="match status" value="1"/>
</dbReference>
<dbReference type="PANTHER" id="PTHR34726:SF2">
    <property type="entry name" value="HSP20-LIKE CHAPERONE DOMAIN-CONTAINING PROTEIN-RELATED"/>
    <property type="match status" value="1"/>
</dbReference>
<dbReference type="PROSITE" id="PS01031">
    <property type="entry name" value="SHSP"/>
    <property type="match status" value="1"/>
</dbReference>